<sequence>MAAEEKDPLSYFAAYGSSSSDSSDENSEPEDAGRKEAASAPTTGGRGKQAEKRLPGPDELFRSVTRPAFLYNPLNKQIDWERHVVKAPEEPPKEFKIWKSNCVPPPETYTTEKKPPPPELDMAIKWSNIYEDNGDDAPQNAKKARLLPEGEETVESDDDKDERASKIRRVEPGEAAKKKK</sequence>
<name>CA052_MOUSE</name>
<accession>Q9CWU4</accession>
<accession>Q9CRP5</accession>
<evidence type="ECO:0000250" key="1">
    <source>
        <dbReference type="UniProtKB" id="Q8N6N3"/>
    </source>
</evidence>
<evidence type="ECO:0000256" key="2">
    <source>
        <dbReference type="SAM" id="MobiDB-lite"/>
    </source>
</evidence>
<evidence type="ECO:0000305" key="3"/>
<evidence type="ECO:0007744" key="4">
    <source>
    </source>
</evidence>
<evidence type="ECO:0007744" key="5">
    <source>
    </source>
</evidence>
<evidence type="ECO:0007744" key="6">
    <source>
    </source>
</evidence>
<reference key="1">
    <citation type="journal article" date="2005" name="Science">
        <title>The transcriptional landscape of the mammalian genome.</title>
        <authorList>
            <person name="Carninci P."/>
            <person name="Kasukawa T."/>
            <person name="Katayama S."/>
            <person name="Gough J."/>
            <person name="Frith M.C."/>
            <person name="Maeda N."/>
            <person name="Oyama R."/>
            <person name="Ravasi T."/>
            <person name="Lenhard B."/>
            <person name="Wells C."/>
            <person name="Kodzius R."/>
            <person name="Shimokawa K."/>
            <person name="Bajic V.B."/>
            <person name="Brenner S.E."/>
            <person name="Batalov S."/>
            <person name="Forrest A.R."/>
            <person name="Zavolan M."/>
            <person name="Davis M.J."/>
            <person name="Wilming L.G."/>
            <person name="Aidinis V."/>
            <person name="Allen J.E."/>
            <person name="Ambesi-Impiombato A."/>
            <person name="Apweiler R."/>
            <person name="Aturaliya R.N."/>
            <person name="Bailey T.L."/>
            <person name="Bansal M."/>
            <person name="Baxter L."/>
            <person name="Beisel K.W."/>
            <person name="Bersano T."/>
            <person name="Bono H."/>
            <person name="Chalk A.M."/>
            <person name="Chiu K.P."/>
            <person name="Choudhary V."/>
            <person name="Christoffels A."/>
            <person name="Clutterbuck D.R."/>
            <person name="Crowe M.L."/>
            <person name="Dalla E."/>
            <person name="Dalrymple B.P."/>
            <person name="de Bono B."/>
            <person name="Della Gatta G."/>
            <person name="di Bernardo D."/>
            <person name="Down T."/>
            <person name="Engstrom P."/>
            <person name="Fagiolini M."/>
            <person name="Faulkner G."/>
            <person name="Fletcher C.F."/>
            <person name="Fukushima T."/>
            <person name="Furuno M."/>
            <person name="Futaki S."/>
            <person name="Gariboldi M."/>
            <person name="Georgii-Hemming P."/>
            <person name="Gingeras T.R."/>
            <person name="Gojobori T."/>
            <person name="Green R.E."/>
            <person name="Gustincich S."/>
            <person name="Harbers M."/>
            <person name="Hayashi Y."/>
            <person name="Hensch T.K."/>
            <person name="Hirokawa N."/>
            <person name="Hill D."/>
            <person name="Huminiecki L."/>
            <person name="Iacono M."/>
            <person name="Ikeo K."/>
            <person name="Iwama A."/>
            <person name="Ishikawa T."/>
            <person name="Jakt M."/>
            <person name="Kanapin A."/>
            <person name="Katoh M."/>
            <person name="Kawasawa Y."/>
            <person name="Kelso J."/>
            <person name="Kitamura H."/>
            <person name="Kitano H."/>
            <person name="Kollias G."/>
            <person name="Krishnan S.P."/>
            <person name="Kruger A."/>
            <person name="Kummerfeld S.K."/>
            <person name="Kurochkin I.V."/>
            <person name="Lareau L.F."/>
            <person name="Lazarevic D."/>
            <person name="Lipovich L."/>
            <person name="Liu J."/>
            <person name="Liuni S."/>
            <person name="McWilliam S."/>
            <person name="Madan Babu M."/>
            <person name="Madera M."/>
            <person name="Marchionni L."/>
            <person name="Matsuda H."/>
            <person name="Matsuzawa S."/>
            <person name="Miki H."/>
            <person name="Mignone F."/>
            <person name="Miyake S."/>
            <person name="Morris K."/>
            <person name="Mottagui-Tabar S."/>
            <person name="Mulder N."/>
            <person name="Nakano N."/>
            <person name="Nakauchi H."/>
            <person name="Ng P."/>
            <person name="Nilsson R."/>
            <person name="Nishiguchi S."/>
            <person name="Nishikawa S."/>
            <person name="Nori F."/>
            <person name="Ohara O."/>
            <person name="Okazaki Y."/>
            <person name="Orlando V."/>
            <person name="Pang K.C."/>
            <person name="Pavan W.J."/>
            <person name="Pavesi G."/>
            <person name="Pesole G."/>
            <person name="Petrovsky N."/>
            <person name="Piazza S."/>
            <person name="Reed J."/>
            <person name="Reid J.F."/>
            <person name="Ring B.Z."/>
            <person name="Ringwald M."/>
            <person name="Rost B."/>
            <person name="Ruan Y."/>
            <person name="Salzberg S.L."/>
            <person name="Sandelin A."/>
            <person name="Schneider C."/>
            <person name="Schoenbach C."/>
            <person name="Sekiguchi K."/>
            <person name="Semple C.A."/>
            <person name="Seno S."/>
            <person name="Sessa L."/>
            <person name="Sheng Y."/>
            <person name="Shibata Y."/>
            <person name="Shimada H."/>
            <person name="Shimada K."/>
            <person name="Silva D."/>
            <person name="Sinclair B."/>
            <person name="Sperling S."/>
            <person name="Stupka E."/>
            <person name="Sugiura K."/>
            <person name="Sultana R."/>
            <person name="Takenaka Y."/>
            <person name="Taki K."/>
            <person name="Tammoja K."/>
            <person name="Tan S.L."/>
            <person name="Tang S."/>
            <person name="Taylor M.S."/>
            <person name="Tegner J."/>
            <person name="Teichmann S.A."/>
            <person name="Ueda H.R."/>
            <person name="van Nimwegen E."/>
            <person name="Verardo R."/>
            <person name="Wei C.L."/>
            <person name="Yagi K."/>
            <person name="Yamanishi H."/>
            <person name="Zabarovsky E."/>
            <person name="Zhu S."/>
            <person name="Zimmer A."/>
            <person name="Hide W."/>
            <person name="Bult C."/>
            <person name="Grimmond S.M."/>
            <person name="Teasdale R.D."/>
            <person name="Liu E.T."/>
            <person name="Brusic V."/>
            <person name="Quackenbush J."/>
            <person name="Wahlestedt C."/>
            <person name="Mattick J.S."/>
            <person name="Hume D.A."/>
            <person name="Kai C."/>
            <person name="Sasaki D."/>
            <person name="Tomaru Y."/>
            <person name="Fukuda S."/>
            <person name="Kanamori-Katayama M."/>
            <person name="Suzuki M."/>
            <person name="Aoki J."/>
            <person name="Arakawa T."/>
            <person name="Iida J."/>
            <person name="Imamura K."/>
            <person name="Itoh M."/>
            <person name="Kato T."/>
            <person name="Kawaji H."/>
            <person name="Kawagashira N."/>
            <person name="Kawashima T."/>
            <person name="Kojima M."/>
            <person name="Kondo S."/>
            <person name="Konno H."/>
            <person name="Nakano K."/>
            <person name="Ninomiya N."/>
            <person name="Nishio T."/>
            <person name="Okada M."/>
            <person name="Plessy C."/>
            <person name="Shibata K."/>
            <person name="Shiraki T."/>
            <person name="Suzuki S."/>
            <person name="Tagami M."/>
            <person name="Waki K."/>
            <person name="Watahiki A."/>
            <person name="Okamura-Oho Y."/>
            <person name="Suzuki H."/>
            <person name="Kawai J."/>
            <person name="Hayashizaki Y."/>
        </authorList>
    </citation>
    <scope>NUCLEOTIDE SEQUENCE [LARGE SCALE MRNA]</scope>
    <source>
        <strain>C57BL/6J</strain>
        <tissue>Embryonic head</tissue>
        <tissue>Embryonic stem cell</tissue>
    </source>
</reference>
<reference key="2">
    <citation type="journal article" date="2004" name="Genome Res.">
        <title>The status, quality, and expansion of the NIH full-length cDNA project: the Mammalian Gene Collection (MGC).</title>
        <authorList>
            <consortium name="The MGC Project Team"/>
        </authorList>
    </citation>
    <scope>NUCLEOTIDE SEQUENCE [LARGE SCALE MRNA]</scope>
</reference>
<reference key="3">
    <citation type="journal article" date="2007" name="Proc. Natl. Acad. Sci. U.S.A.">
        <title>Large-scale phosphorylation analysis of mouse liver.</title>
        <authorList>
            <person name="Villen J."/>
            <person name="Beausoleil S.A."/>
            <person name="Gerber S.A."/>
            <person name="Gygi S.P."/>
        </authorList>
    </citation>
    <scope>PHOSPHORYLATION [LARGE SCALE ANALYSIS] AT SER-156</scope>
    <scope>IDENTIFICATION BY MASS SPECTROMETRY [LARGE SCALE ANALYSIS]</scope>
    <source>
        <tissue>Liver</tissue>
    </source>
</reference>
<reference key="4">
    <citation type="journal article" date="2009" name="Mol. Cell. Proteomics">
        <title>Large scale localization of protein phosphorylation by use of electron capture dissociation mass spectrometry.</title>
        <authorList>
            <person name="Sweet S.M."/>
            <person name="Bailey C.M."/>
            <person name="Cunningham D.L."/>
            <person name="Heath J.K."/>
            <person name="Cooper H.J."/>
        </authorList>
    </citation>
    <scope>PHOSPHORYLATION [LARGE SCALE ANALYSIS] AT SER-156</scope>
    <scope>IDENTIFICATION BY MASS SPECTROMETRY [LARGE SCALE ANALYSIS]</scope>
    <source>
        <tissue>Embryonic fibroblast</tissue>
    </source>
</reference>
<reference key="5">
    <citation type="journal article" date="2010" name="Cell">
        <title>A tissue-specific atlas of mouse protein phosphorylation and expression.</title>
        <authorList>
            <person name="Huttlin E.L."/>
            <person name="Jedrychowski M.P."/>
            <person name="Elias J.E."/>
            <person name="Goswami T."/>
            <person name="Rad R."/>
            <person name="Beausoleil S.A."/>
            <person name="Villen J."/>
            <person name="Haas W."/>
            <person name="Sowa M.E."/>
            <person name="Gygi S.P."/>
        </authorList>
    </citation>
    <scope>PHOSPHORYLATION [LARGE SCALE ANALYSIS] AT SER-156</scope>
    <scope>IDENTIFICATION BY MASS SPECTROMETRY [LARGE SCALE ANALYSIS]</scope>
    <source>
        <tissue>Brain</tissue>
        <tissue>Brown adipose tissue</tissue>
        <tissue>Kidney</tissue>
        <tissue>Lung</tissue>
        <tissue>Pancreas</tissue>
        <tissue>Spleen</tissue>
        <tissue>Testis</tissue>
    </source>
</reference>
<organism>
    <name type="scientific">Mus musculus</name>
    <name type="common">Mouse</name>
    <dbReference type="NCBI Taxonomy" id="10090"/>
    <lineage>
        <taxon>Eukaryota</taxon>
        <taxon>Metazoa</taxon>
        <taxon>Chordata</taxon>
        <taxon>Craniata</taxon>
        <taxon>Vertebrata</taxon>
        <taxon>Euteleostomi</taxon>
        <taxon>Mammalia</taxon>
        <taxon>Eutheria</taxon>
        <taxon>Euarchontoglires</taxon>
        <taxon>Glires</taxon>
        <taxon>Rodentia</taxon>
        <taxon>Myomorpha</taxon>
        <taxon>Muroidea</taxon>
        <taxon>Muridae</taxon>
        <taxon>Murinae</taxon>
        <taxon>Mus</taxon>
        <taxon>Mus</taxon>
    </lineage>
</organism>
<feature type="chain" id="PRO_0000254631" description="UPF0690 protein C1orf52 homolog">
    <location>
        <begin position="1"/>
        <end position="180"/>
    </location>
</feature>
<feature type="region of interest" description="Disordered" evidence="2">
    <location>
        <begin position="1"/>
        <end position="66"/>
    </location>
</feature>
<feature type="region of interest" description="Disordered" evidence="2">
    <location>
        <begin position="96"/>
        <end position="180"/>
    </location>
</feature>
<feature type="compositionally biased region" description="Basic and acidic residues" evidence="2">
    <location>
        <begin position="48"/>
        <end position="61"/>
    </location>
</feature>
<feature type="compositionally biased region" description="Acidic residues" evidence="2">
    <location>
        <begin position="149"/>
        <end position="160"/>
    </location>
</feature>
<feature type="compositionally biased region" description="Basic and acidic residues" evidence="2">
    <location>
        <begin position="161"/>
        <end position="180"/>
    </location>
</feature>
<feature type="modified residue" description="Phosphothreonine" evidence="1">
    <location>
        <position position="65"/>
    </location>
</feature>
<feature type="modified residue" description="Phosphotyrosine" evidence="1">
    <location>
        <position position="130"/>
    </location>
</feature>
<feature type="modified residue" description="Phosphoserine" evidence="4 5 6">
    <location>
        <position position="156"/>
    </location>
</feature>
<dbReference type="EMBL" id="AK010378">
    <property type="protein sequence ID" value="BAB26896.1"/>
    <property type="molecule type" value="mRNA"/>
</dbReference>
<dbReference type="EMBL" id="AK019404">
    <property type="protein sequence ID" value="BAB31704.1"/>
    <property type="status" value="ALT_INIT"/>
    <property type="molecule type" value="mRNA"/>
</dbReference>
<dbReference type="EMBL" id="BC115465">
    <property type="protein sequence ID" value="AAI15466.1"/>
    <property type="molecule type" value="mRNA"/>
</dbReference>
<dbReference type="CCDS" id="CCDS17898.1"/>
<dbReference type="RefSeq" id="NP_079831.1">
    <property type="nucleotide sequence ID" value="NM_025555.5"/>
</dbReference>
<dbReference type="FunCoup" id="Q9CWU4">
    <property type="interactions" value="2520"/>
</dbReference>
<dbReference type="STRING" id="10090.ENSMUSP00000045376"/>
<dbReference type="ChEMBL" id="CHEMBL4879508"/>
<dbReference type="iPTMnet" id="Q9CWU4"/>
<dbReference type="PhosphoSitePlus" id="Q9CWU4"/>
<dbReference type="jPOST" id="Q9CWU4"/>
<dbReference type="PaxDb" id="10090-ENSMUSP00000045376"/>
<dbReference type="PeptideAtlas" id="Q9CWU4"/>
<dbReference type="Pumba" id="Q9CWU4"/>
<dbReference type="Antibodypedia" id="33566">
    <property type="antibodies" value="42 antibodies from 8 providers"/>
</dbReference>
<dbReference type="DNASU" id="66421"/>
<dbReference type="Ensembl" id="ENSMUST00000039571.14">
    <property type="protein sequence ID" value="ENSMUSP00000045376.8"/>
    <property type="gene ID" value="ENSMUSG00000036873.14"/>
</dbReference>
<dbReference type="GeneID" id="66421"/>
<dbReference type="KEGG" id="mmu:66421"/>
<dbReference type="UCSC" id="uc008rqt.1">
    <property type="organism name" value="mouse"/>
</dbReference>
<dbReference type="AGR" id="MGI:1913671"/>
<dbReference type="MGI" id="MGI:1913671">
    <property type="gene designation" value="2410004B18Rik"/>
</dbReference>
<dbReference type="VEuPathDB" id="HostDB:ENSMUSG00000036873"/>
<dbReference type="eggNOG" id="ENOG502QVJV">
    <property type="taxonomic scope" value="Eukaryota"/>
</dbReference>
<dbReference type="GeneTree" id="ENSGT00390000017398"/>
<dbReference type="HOGENOM" id="CLU_127170_0_0_1"/>
<dbReference type="InParanoid" id="Q9CWU4"/>
<dbReference type="OMA" id="PERICEP"/>
<dbReference type="OrthoDB" id="1906229at2759"/>
<dbReference type="PhylomeDB" id="Q9CWU4"/>
<dbReference type="TreeFam" id="TF333299"/>
<dbReference type="BioGRID-ORCS" id="66421">
    <property type="hits" value="4 hits in 77 CRISPR screens"/>
</dbReference>
<dbReference type="PRO" id="PR:Q9CWU4"/>
<dbReference type="Proteomes" id="UP000000589">
    <property type="component" value="Chromosome 3"/>
</dbReference>
<dbReference type="RNAct" id="Q9CWU4">
    <property type="molecule type" value="protein"/>
</dbReference>
<dbReference type="Bgee" id="ENSMUSG00000036873">
    <property type="expression patterns" value="Expressed in motor neuron and 248 other cell types or tissues"/>
</dbReference>
<dbReference type="ExpressionAtlas" id="Q9CWU4">
    <property type="expression patterns" value="baseline and differential"/>
</dbReference>
<dbReference type="GO" id="GO:0005654">
    <property type="term" value="C:nucleoplasm"/>
    <property type="evidence" value="ECO:0007669"/>
    <property type="project" value="Ensembl"/>
</dbReference>
<dbReference type="InterPro" id="IPR029089">
    <property type="entry name" value="DUF4660"/>
</dbReference>
<dbReference type="PANTHER" id="PTHR31833">
    <property type="entry name" value="UPF0690 PROTEIN C1ORF52"/>
    <property type="match status" value="1"/>
</dbReference>
<dbReference type="PANTHER" id="PTHR31833:SF2">
    <property type="entry name" value="UPF0690 PROTEIN C1ORF52"/>
    <property type="match status" value="1"/>
</dbReference>
<dbReference type="Pfam" id="PF15559">
    <property type="entry name" value="DUF4660"/>
    <property type="match status" value="1"/>
</dbReference>
<proteinExistence type="evidence at protein level"/>
<keyword id="KW-0597">Phosphoprotein</keyword>
<keyword id="KW-1185">Reference proteome</keyword>
<comment type="similarity">
    <text evidence="3">Belongs to the UPF0690 family.</text>
</comment>
<comment type="sequence caution" evidence="3">
    <conflict type="erroneous initiation">
        <sequence resource="EMBL-CDS" id="BAB31704"/>
    </conflict>
</comment>
<protein>
    <recommendedName>
        <fullName>UPF0690 protein C1orf52 homolog</fullName>
    </recommendedName>
</protein>